<name>NUP58_MOUSE</name>
<proteinExistence type="evidence at protein level"/>
<organism>
    <name type="scientific">Mus musculus</name>
    <name type="common">Mouse</name>
    <dbReference type="NCBI Taxonomy" id="10090"/>
    <lineage>
        <taxon>Eukaryota</taxon>
        <taxon>Metazoa</taxon>
        <taxon>Chordata</taxon>
        <taxon>Craniata</taxon>
        <taxon>Vertebrata</taxon>
        <taxon>Euteleostomi</taxon>
        <taxon>Mammalia</taxon>
        <taxon>Eutheria</taxon>
        <taxon>Euarchontoglires</taxon>
        <taxon>Glires</taxon>
        <taxon>Rodentia</taxon>
        <taxon>Myomorpha</taxon>
        <taxon>Muroidea</taxon>
        <taxon>Muridae</taxon>
        <taxon>Murinae</taxon>
        <taxon>Mus</taxon>
        <taxon>Mus</taxon>
    </lineage>
</organism>
<protein>
    <recommendedName>
        <fullName evidence="7">Nucleoporin p58/p45</fullName>
    </recommendedName>
    <alternativeName>
        <fullName evidence="3">58 kDa nucleoporin</fullName>
    </alternativeName>
    <alternativeName>
        <fullName>Nucleoporin-like protein 1</fullName>
    </alternativeName>
</protein>
<gene>
    <name evidence="3" type="primary">Nup58</name>
    <name type="synonym">Nupl1</name>
</gene>
<keyword id="KW-0025">Alternative splicing</keyword>
<keyword id="KW-0175">Coiled coil</keyword>
<keyword id="KW-0325">Glycoprotein</keyword>
<keyword id="KW-0472">Membrane</keyword>
<keyword id="KW-0509">mRNA transport</keyword>
<keyword id="KW-0906">Nuclear pore complex</keyword>
<keyword id="KW-0539">Nucleus</keyword>
<keyword id="KW-0597">Phosphoprotein</keyword>
<keyword id="KW-0653">Protein transport</keyword>
<keyword id="KW-1185">Reference proteome</keyword>
<keyword id="KW-0677">Repeat</keyword>
<keyword id="KW-0811">Translocation</keyword>
<keyword id="KW-0813">Transport</keyword>
<evidence type="ECO:0000250" key="1"/>
<evidence type="ECO:0000250" key="2">
    <source>
        <dbReference type="UniProtKB" id="P70581"/>
    </source>
</evidence>
<evidence type="ECO:0000250" key="3">
    <source>
        <dbReference type="UniProtKB" id="Q9BVL2"/>
    </source>
</evidence>
<evidence type="ECO:0000255" key="4"/>
<evidence type="ECO:0000256" key="5">
    <source>
        <dbReference type="SAM" id="MobiDB-lite"/>
    </source>
</evidence>
<evidence type="ECO:0000303" key="6">
    <source>
    </source>
</evidence>
<evidence type="ECO:0000305" key="7"/>
<comment type="function">
    <text evidence="2">Component of the nuclear pore complex, a complex required for the trafficking across the nuclear membrane.</text>
</comment>
<comment type="subunit">
    <text evidence="2">Component of the p62 complex, a complex at least composed of NUP62, NUP54, and NUP58. Interacts with NUTF2. Interacts with SRP1-alpha and Importin p97 proteins when they are together, but not with SRP1-alpha protein alone (By similarity).</text>
</comment>
<comment type="interaction">
    <interactant intactId="EBI-646962">
        <id>Q8R332-1</id>
    </interactant>
    <interactant intactId="EBI-397697">
        <id>P63085</id>
        <label>Mapk1</label>
    </interactant>
    <organismsDiffer>false</organismsDiffer>
    <experiments>3</experiments>
</comment>
<comment type="subcellular location">
    <subcellularLocation>
        <location evidence="2">Nucleus</location>
        <location evidence="2">Nuclear pore complex</location>
    </subcellularLocation>
    <subcellularLocation>
        <location evidence="2">Nucleus membrane</location>
        <topology evidence="2">Peripheral membrane protein</topology>
        <orientation evidence="2">Cytoplasmic side</orientation>
    </subcellularLocation>
    <subcellularLocation>
        <location evidence="2">Nucleus membrane</location>
        <topology evidence="2">Peripheral membrane protein</topology>
        <orientation evidence="2">Nucleoplasmic side</orientation>
    </subcellularLocation>
    <text evidence="2">Biased towards cytoplasmic side. Central region of the nuclear pore complex, within the transporter.</text>
</comment>
<comment type="alternative products">
    <event type="alternative splicing"/>
    <isoform>
        <id>Q8R332-1</id>
        <name>1</name>
        <name>p58</name>
        <sequence type="displayed"/>
    </isoform>
    <isoform>
        <id>Q8R332-2</id>
        <name>2</name>
        <sequence type="described" ref="VSP_008573"/>
    </isoform>
    <isoform>
        <id>Q8R332-3</id>
        <name>3</name>
        <sequence type="described" ref="VSP_008574"/>
    </isoform>
    <isoform>
        <id>Q8R332-4</id>
        <name>4</name>
        <sequence type="described" ref="VSP_008575"/>
    </isoform>
</comment>
<comment type="domain">
    <text evidence="7">Contains FG repeats. FG repeats are interaction sites for karyopherins (importins, exportins) and form probably an affinity gradient, guiding the transport proteins unidirectionally with their cargo through the NPC. FG repeat regions are highly flexible and lack ordered secondary structure. The overall conservation of FG repeats regarding exact sequence, spacing, and repeat unit length is limited.</text>
</comment>
<comment type="PTM">
    <text evidence="1">O-glycosylated.</text>
</comment>
<comment type="miscellaneous">
    <text>In rat, the p62 complex contains two different isoforms of NUP58. Isoform p45 has however not been isolated in mouse so far.</text>
</comment>
<comment type="similarity">
    <text evidence="7">Belongs to the NUP58 family.</text>
</comment>
<sequence length="587" mass="59445">MATGFSFGSGTLGSTTVAPGGTGAGSGFSFGTVASSTPSVGLNFGSLGSSVTPASTSASAGGFGTGLFGSKPATGFTLGGTSAGTAATTSASTTGFSLGFSKPAASATPFALPVTSTSASGLTLSSALTSTPAASTGFTLNNLGATPATTTTASTGLSLGGALAGLGGSLFQSGNTATSGLGQNALSLSLGTTAPTSAASNEGLGGIDFSTSSDKKSDKTGTRPEDSKALKDENLPPVICQDVENLQKFVKEQKQVQEEISRMSSKAMLKVQEDIKALKQLLSLAASGLQRNTLNIDKLKLETAQELKNAEIALRTQKTPPGLQHENTAPADYFRILVQQFEVQLQQYRQQIEELENHLATQASNSHITPQDLSMAMQKIYQTFVALAAQLQSIHENVKVLKEQYLGYRKMFLGDAVDVFEARRTEAKKWQNAPRVTTGPTPFSTMPNAAAVAMAATLTQQQQPATGPQPSLGVSFGTPFGSGIGTGLQSSGLGSSNLGGFGTSSGFGCGTTGASTFGFGTTDKPSGSLSAGFGSSSTSGFNFSNPGITASAGLTFGVSNPASAGFGTGGQLLQLKRPPAGNKRGKR</sequence>
<dbReference type="EMBL" id="AK029688">
    <property type="protein sequence ID" value="BAC26564.1"/>
    <property type="molecule type" value="mRNA"/>
</dbReference>
<dbReference type="EMBL" id="AK078279">
    <property type="protein sequence ID" value="BAC37200.1"/>
    <property type="molecule type" value="mRNA"/>
</dbReference>
<dbReference type="EMBL" id="AK086412">
    <property type="protein sequence ID" value="BAC39663.1"/>
    <property type="molecule type" value="mRNA"/>
</dbReference>
<dbReference type="EMBL" id="AK146477">
    <property type="protein sequence ID" value="BAE27201.1"/>
    <property type="molecule type" value="mRNA"/>
</dbReference>
<dbReference type="EMBL" id="BC026743">
    <property type="protein sequence ID" value="AAH26743.1"/>
    <property type="molecule type" value="mRNA"/>
</dbReference>
<dbReference type="CCDS" id="CCDS27175.1">
    <molecule id="Q8R332-1"/>
</dbReference>
<dbReference type="CCDS" id="CCDS88679.1">
    <molecule id="Q8R332-3"/>
</dbReference>
<dbReference type="CCDS" id="CCDS88680.1">
    <molecule id="Q8R332-2"/>
</dbReference>
<dbReference type="RefSeq" id="NP_001349368.1">
    <molecule id="Q8R332-3"/>
    <property type="nucleotide sequence ID" value="NM_001362439.1"/>
</dbReference>
<dbReference type="RefSeq" id="NP_001349369.1">
    <molecule id="Q8R332-2"/>
    <property type="nucleotide sequence ID" value="NM_001362440.1"/>
</dbReference>
<dbReference type="RefSeq" id="NP_733479.1">
    <molecule id="Q8R332-1"/>
    <property type="nucleotide sequence ID" value="NM_170591.2"/>
</dbReference>
<dbReference type="SMR" id="Q8R332"/>
<dbReference type="BioGRID" id="214973">
    <property type="interactions" value="1"/>
</dbReference>
<dbReference type="ComplexPortal" id="CPX-4474">
    <property type="entry name" value="Nuclear pore complex"/>
</dbReference>
<dbReference type="FunCoup" id="Q8R332">
    <property type="interactions" value="3193"/>
</dbReference>
<dbReference type="IntAct" id="Q8R332">
    <property type="interactions" value="2"/>
</dbReference>
<dbReference type="STRING" id="10090.ENSMUSP00000038716"/>
<dbReference type="GlyGen" id="Q8R332">
    <property type="glycosylation" value="11 sites, 1 O-linked glycan (7 sites)"/>
</dbReference>
<dbReference type="iPTMnet" id="Q8R332"/>
<dbReference type="PhosphoSitePlus" id="Q8R332"/>
<dbReference type="SwissPalm" id="Q8R332"/>
<dbReference type="PaxDb" id="10090-ENSMUSP00000038716"/>
<dbReference type="ProteomicsDB" id="294251">
    <molecule id="Q8R332-1"/>
</dbReference>
<dbReference type="ProteomicsDB" id="294252">
    <molecule id="Q8R332-2"/>
</dbReference>
<dbReference type="ProteomicsDB" id="294253">
    <molecule id="Q8R332-3"/>
</dbReference>
<dbReference type="ProteomicsDB" id="294254">
    <molecule id="Q8R332-4"/>
</dbReference>
<dbReference type="Pumba" id="Q8R332"/>
<dbReference type="DNASU" id="71844"/>
<dbReference type="Ensembl" id="ENSMUST00000041905.8">
    <molecule id="Q8R332-1"/>
    <property type="protein sequence ID" value="ENSMUSP00000038716.7"/>
    <property type="gene ID" value="ENSMUSG00000114797.2"/>
</dbReference>
<dbReference type="Ensembl" id="ENSMUST00000225111.2">
    <molecule id="Q8R332-3"/>
    <property type="protein sequence ID" value="ENSMUSP00000153625.2"/>
    <property type="gene ID" value="ENSMUSG00000114797.2"/>
</dbReference>
<dbReference type="Ensembl" id="ENSMUST00000225311.2">
    <molecule id="Q8R332-2"/>
    <property type="protein sequence ID" value="ENSMUSP00000153117.2"/>
    <property type="gene ID" value="ENSMUSG00000114797.2"/>
</dbReference>
<dbReference type="Ensembl" id="ENSMUST00000225805.2">
    <molecule id="Q8R332-4"/>
    <property type="protein sequence ID" value="ENSMUSP00000153642.2"/>
    <property type="gene ID" value="ENSMUSG00000063895.8"/>
</dbReference>
<dbReference type="GeneID" id="71844"/>
<dbReference type="KEGG" id="mmu:71844"/>
<dbReference type="UCSC" id="uc007uex.1">
    <molecule id="Q8R332-2"/>
    <property type="organism name" value="mouse"/>
</dbReference>
<dbReference type="UCSC" id="uc007uey.1">
    <molecule id="Q8R332-3"/>
    <property type="organism name" value="mouse"/>
</dbReference>
<dbReference type="UCSC" id="uc007uez.1">
    <molecule id="Q8R332-1"/>
    <property type="organism name" value="mouse"/>
</dbReference>
<dbReference type="AGR" id="MGI:1919094"/>
<dbReference type="CTD" id="9818"/>
<dbReference type="MGI" id="MGI:1919094">
    <property type="gene designation" value="Nup58"/>
</dbReference>
<dbReference type="VEuPathDB" id="HostDB:ENSMUSG00000063895"/>
<dbReference type="VEuPathDB" id="HostDB:ENSMUSG00000114797"/>
<dbReference type="eggNOG" id="ENOG502QRD8">
    <property type="taxonomic scope" value="Eukaryota"/>
</dbReference>
<dbReference type="GeneTree" id="ENSGT00730000111111"/>
<dbReference type="HOGENOM" id="CLU_034851_1_0_1"/>
<dbReference type="InParanoid" id="Q8R332"/>
<dbReference type="OMA" id="ALMNKSY"/>
<dbReference type="OrthoDB" id="2538017at2759"/>
<dbReference type="PhylomeDB" id="Q8R332"/>
<dbReference type="TreeFam" id="TF106502"/>
<dbReference type="Reactome" id="R-MMU-159227">
    <property type="pathway name" value="Transport of the SLBP independent Mature mRNA"/>
</dbReference>
<dbReference type="Reactome" id="R-MMU-159230">
    <property type="pathway name" value="Transport of the SLBP Dependant Mature mRNA"/>
</dbReference>
<dbReference type="Reactome" id="R-MMU-159231">
    <property type="pathway name" value="Transport of Mature mRNA Derived from an Intronless Transcript"/>
</dbReference>
<dbReference type="Reactome" id="R-MMU-159236">
    <property type="pathway name" value="Transport of Mature mRNA derived from an Intron-Containing Transcript"/>
</dbReference>
<dbReference type="Reactome" id="R-MMU-170822">
    <property type="pathway name" value="Regulation of Glucokinase by Glucokinase Regulatory Protein"/>
</dbReference>
<dbReference type="Reactome" id="R-MMU-191859">
    <property type="pathway name" value="snRNP Assembly"/>
</dbReference>
<dbReference type="Reactome" id="R-MMU-3108214">
    <property type="pathway name" value="SUMOylation of DNA damage response and repair proteins"/>
</dbReference>
<dbReference type="Reactome" id="R-MMU-3232142">
    <property type="pathway name" value="SUMOylation of ubiquitinylation proteins"/>
</dbReference>
<dbReference type="Reactome" id="R-MMU-3301854">
    <property type="pathway name" value="Nuclear Pore Complex (NPC) Disassembly"/>
</dbReference>
<dbReference type="Reactome" id="R-MMU-3371453">
    <property type="pathway name" value="Regulation of HSF1-mediated heat shock response"/>
</dbReference>
<dbReference type="Reactome" id="R-MMU-4085377">
    <property type="pathway name" value="SUMOylation of SUMOylation proteins"/>
</dbReference>
<dbReference type="Reactome" id="R-MMU-4551638">
    <property type="pathway name" value="SUMOylation of chromatin organization proteins"/>
</dbReference>
<dbReference type="Reactome" id="R-MMU-4570464">
    <property type="pathway name" value="SUMOylation of RNA binding proteins"/>
</dbReference>
<dbReference type="Reactome" id="R-MMU-4615885">
    <property type="pathway name" value="SUMOylation of DNA replication proteins"/>
</dbReference>
<dbReference type="Reactome" id="R-MMU-5578749">
    <property type="pathway name" value="Transcriptional regulation by small RNAs"/>
</dbReference>
<dbReference type="BioGRID-ORCS" id="71844">
    <property type="hits" value="10 hits in 77 CRISPR screens"/>
</dbReference>
<dbReference type="ChiTaRS" id="Nupl1">
    <property type="organism name" value="mouse"/>
</dbReference>
<dbReference type="PRO" id="PR:Q8R332"/>
<dbReference type="Proteomes" id="UP000000589">
    <property type="component" value="Chromosome 14"/>
</dbReference>
<dbReference type="RNAct" id="Q8R332">
    <property type="molecule type" value="protein"/>
</dbReference>
<dbReference type="Bgee" id="ENSMUSG00000063895">
    <property type="expression patterns" value="Expressed in embryonic cell in blastocyst and 6 other cell types or tissues"/>
</dbReference>
<dbReference type="GO" id="GO:0005635">
    <property type="term" value="C:nuclear envelope"/>
    <property type="evidence" value="ECO:0000266"/>
    <property type="project" value="ComplexPortal"/>
</dbReference>
<dbReference type="GO" id="GO:0031965">
    <property type="term" value="C:nuclear membrane"/>
    <property type="evidence" value="ECO:0007669"/>
    <property type="project" value="UniProtKB-SubCell"/>
</dbReference>
<dbReference type="GO" id="GO:0005643">
    <property type="term" value="C:nuclear pore"/>
    <property type="evidence" value="ECO:0000303"/>
    <property type="project" value="ComplexPortal"/>
</dbReference>
<dbReference type="GO" id="GO:0042802">
    <property type="term" value="F:identical protein binding"/>
    <property type="evidence" value="ECO:0007669"/>
    <property type="project" value="Ensembl"/>
</dbReference>
<dbReference type="GO" id="GO:0008139">
    <property type="term" value="F:nuclear localization sequence binding"/>
    <property type="evidence" value="ECO:0007669"/>
    <property type="project" value="Ensembl"/>
</dbReference>
<dbReference type="GO" id="GO:0044877">
    <property type="term" value="F:protein-containing complex binding"/>
    <property type="evidence" value="ECO:0007669"/>
    <property type="project" value="Ensembl"/>
</dbReference>
<dbReference type="GO" id="GO:0017056">
    <property type="term" value="F:structural constituent of nuclear pore"/>
    <property type="evidence" value="ECO:0007669"/>
    <property type="project" value="Ensembl"/>
</dbReference>
<dbReference type="GO" id="GO:0051028">
    <property type="term" value="P:mRNA transport"/>
    <property type="evidence" value="ECO:0007669"/>
    <property type="project" value="UniProtKB-KW"/>
</dbReference>
<dbReference type="GO" id="GO:0006913">
    <property type="term" value="P:nucleocytoplasmic transport"/>
    <property type="evidence" value="ECO:0000303"/>
    <property type="project" value="ComplexPortal"/>
</dbReference>
<dbReference type="GO" id="GO:0015031">
    <property type="term" value="P:protein transport"/>
    <property type="evidence" value="ECO:0007669"/>
    <property type="project" value="UniProtKB-KW"/>
</dbReference>
<dbReference type="GO" id="GO:0042306">
    <property type="term" value="P:regulation of protein import into nucleus"/>
    <property type="evidence" value="ECO:0007669"/>
    <property type="project" value="Ensembl"/>
</dbReference>
<dbReference type="Gene3D" id="6.10.140.1350">
    <property type="match status" value="1"/>
</dbReference>
<dbReference type="InterPro" id="IPR024882">
    <property type="entry name" value="NUP58/p45/49"/>
</dbReference>
<dbReference type="PANTHER" id="PTHR13437">
    <property type="entry name" value="NUCLEOPORIN P58/P45 NUCLEOPORIN-LIKE PROTEIN 1"/>
    <property type="match status" value="1"/>
</dbReference>
<dbReference type="PANTHER" id="PTHR13437:SF2">
    <property type="entry name" value="NUCLEOPORIN P58_P45"/>
    <property type="match status" value="1"/>
</dbReference>
<dbReference type="Pfam" id="PF15967">
    <property type="entry name" value="Nucleoporin_FG2"/>
    <property type="match status" value="1"/>
</dbReference>
<reference key="1">
    <citation type="journal article" date="2005" name="Science">
        <title>The transcriptional landscape of the mammalian genome.</title>
        <authorList>
            <person name="Carninci P."/>
            <person name="Kasukawa T."/>
            <person name="Katayama S."/>
            <person name="Gough J."/>
            <person name="Frith M.C."/>
            <person name="Maeda N."/>
            <person name="Oyama R."/>
            <person name="Ravasi T."/>
            <person name="Lenhard B."/>
            <person name="Wells C."/>
            <person name="Kodzius R."/>
            <person name="Shimokawa K."/>
            <person name="Bajic V.B."/>
            <person name="Brenner S.E."/>
            <person name="Batalov S."/>
            <person name="Forrest A.R."/>
            <person name="Zavolan M."/>
            <person name="Davis M.J."/>
            <person name="Wilming L.G."/>
            <person name="Aidinis V."/>
            <person name="Allen J.E."/>
            <person name="Ambesi-Impiombato A."/>
            <person name="Apweiler R."/>
            <person name="Aturaliya R.N."/>
            <person name="Bailey T.L."/>
            <person name="Bansal M."/>
            <person name="Baxter L."/>
            <person name="Beisel K.W."/>
            <person name="Bersano T."/>
            <person name="Bono H."/>
            <person name="Chalk A.M."/>
            <person name="Chiu K.P."/>
            <person name="Choudhary V."/>
            <person name="Christoffels A."/>
            <person name="Clutterbuck D.R."/>
            <person name="Crowe M.L."/>
            <person name="Dalla E."/>
            <person name="Dalrymple B.P."/>
            <person name="de Bono B."/>
            <person name="Della Gatta G."/>
            <person name="di Bernardo D."/>
            <person name="Down T."/>
            <person name="Engstrom P."/>
            <person name="Fagiolini M."/>
            <person name="Faulkner G."/>
            <person name="Fletcher C.F."/>
            <person name="Fukushima T."/>
            <person name="Furuno M."/>
            <person name="Futaki S."/>
            <person name="Gariboldi M."/>
            <person name="Georgii-Hemming P."/>
            <person name="Gingeras T.R."/>
            <person name="Gojobori T."/>
            <person name="Green R.E."/>
            <person name="Gustincich S."/>
            <person name="Harbers M."/>
            <person name="Hayashi Y."/>
            <person name="Hensch T.K."/>
            <person name="Hirokawa N."/>
            <person name="Hill D."/>
            <person name="Huminiecki L."/>
            <person name="Iacono M."/>
            <person name="Ikeo K."/>
            <person name="Iwama A."/>
            <person name="Ishikawa T."/>
            <person name="Jakt M."/>
            <person name="Kanapin A."/>
            <person name="Katoh M."/>
            <person name="Kawasawa Y."/>
            <person name="Kelso J."/>
            <person name="Kitamura H."/>
            <person name="Kitano H."/>
            <person name="Kollias G."/>
            <person name="Krishnan S.P."/>
            <person name="Kruger A."/>
            <person name="Kummerfeld S.K."/>
            <person name="Kurochkin I.V."/>
            <person name="Lareau L.F."/>
            <person name="Lazarevic D."/>
            <person name="Lipovich L."/>
            <person name="Liu J."/>
            <person name="Liuni S."/>
            <person name="McWilliam S."/>
            <person name="Madan Babu M."/>
            <person name="Madera M."/>
            <person name="Marchionni L."/>
            <person name="Matsuda H."/>
            <person name="Matsuzawa S."/>
            <person name="Miki H."/>
            <person name="Mignone F."/>
            <person name="Miyake S."/>
            <person name="Morris K."/>
            <person name="Mottagui-Tabar S."/>
            <person name="Mulder N."/>
            <person name="Nakano N."/>
            <person name="Nakauchi H."/>
            <person name="Ng P."/>
            <person name="Nilsson R."/>
            <person name="Nishiguchi S."/>
            <person name="Nishikawa S."/>
            <person name="Nori F."/>
            <person name="Ohara O."/>
            <person name="Okazaki Y."/>
            <person name="Orlando V."/>
            <person name="Pang K.C."/>
            <person name="Pavan W.J."/>
            <person name="Pavesi G."/>
            <person name="Pesole G."/>
            <person name="Petrovsky N."/>
            <person name="Piazza S."/>
            <person name="Reed J."/>
            <person name="Reid J.F."/>
            <person name="Ring B.Z."/>
            <person name="Ringwald M."/>
            <person name="Rost B."/>
            <person name="Ruan Y."/>
            <person name="Salzberg S.L."/>
            <person name="Sandelin A."/>
            <person name="Schneider C."/>
            <person name="Schoenbach C."/>
            <person name="Sekiguchi K."/>
            <person name="Semple C.A."/>
            <person name="Seno S."/>
            <person name="Sessa L."/>
            <person name="Sheng Y."/>
            <person name="Shibata Y."/>
            <person name="Shimada H."/>
            <person name="Shimada K."/>
            <person name="Silva D."/>
            <person name="Sinclair B."/>
            <person name="Sperling S."/>
            <person name="Stupka E."/>
            <person name="Sugiura K."/>
            <person name="Sultana R."/>
            <person name="Takenaka Y."/>
            <person name="Taki K."/>
            <person name="Tammoja K."/>
            <person name="Tan S.L."/>
            <person name="Tang S."/>
            <person name="Taylor M.S."/>
            <person name="Tegner J."/>
            <person name="Teichmann S.A."/>
            <person name="Ueda H.R."/>
            <person name="van Nimwegen E."/>
            <person name="Verardo R."/>
            <person name="Wei C.L."/>
            <person name="Yagi K."/>
            <person name="Yamanishi H."/>
            <person name="Zabarovsky E."/>
            <person name="Zhu S."/>
            <person name="Zimmer A."/>
            <person name="Hide W."/>
            <person name="Bult C."/>
            <person name="Grimmond S.M."/>
            <person name="Teasdale R.D."/>
            <person name="Liu E.T."/>
            <person name="Brusic V."/>
            <person name="Quackenbush J."/>
            <person name="Wahlestedt C."/>
            <person name="Mattick J.S."/>
            <person name="Hume D.A."/>
            <person name="Kai C."/>
            <person name="Sasaki D."/>
            <person name="Tomaru Y."/>
            <person name="Fukuda S."/>
            <person name="Kanamori-Katayama M."/>
            <person name="Suzuki M."/>
            <person name="Aoki J."/>
            <person name="Arakawa T."/>
            <person name="Iida J."/>
            <person name="Imamura K."/>
            <person name="Itoh M."/>
            <person name="Kato T."/>
            <person name="Kawaji H."/>
            <person name="Kawagashira N."/>
            <person name="Kawashima T."/>
            <person name="Kojima M."/>
            <person name="Kondo S."/>
            <person name="Konno H."/>
            <person name="Nakano K."/>
            <person name="Ninomiya N."/>
            <person name="Nishio T."/>
            <person name="Okada M."/>
            <person name="Plessy C."/>
            <person name="Shibata K."/>
            <person name="Shiraki T."/>
            <person name="Suzuki S."/>
            <person name="Tagami M."/>
            <person name="Waki K."/>
            <person name="Watahiki A."/>
            <person name="Okamura-Oho Y."/>
            <person name="Suzuki H."/>
            <person name="Kawai J."/>
            <person name="Hayashizaki Y."/>
        </authorList>
    </citation>
    <scope>NUCLEOTIDE SEQUENCE [LARGE SCALE MRNA] (ISOFORMS 1; 2; 3 AND 4)</scope>
    <source>
        <strain>C57BL/6J</strain>
        <tissue>Heart</tissue>
        <tissue>Olfactory bulb</tissue>
        <tissue>Testis</tissue>
    </source>
</reference>
<reference key="2">
    <citation type="journal article" date="2004" name="Genome Res.">
        <title>The status, quality, and expansion of the NIH full-length cDNA project: the Mammalian Gene Collection (MGC).</title>
        <authorList>
            <consortium name="The MGC Project Team"/>
        </authorList>
    </citation>
    <scope>NUCLEOTIDE SEQUENCE [LARGE SCALE MRNA] (ISOFORM 1)</scope>
</reference>
<reference key="3">
    <citation type="journal article" date="2010" name="Cell">
        <title>A tissue-specific atlas of mouse protein phosphorylation and expression.</title>
        <authorList>
            <person name="Huttlin E.L."/>
            <person name="Jedrychowski M.P."/>
            <person name="Elias J.E."/>
            <person name="Goswami T."/>
            <person name="Rad R."/>
            <person name="Beausoleil S.A."/>
            <person name="Villen J."/>
            <person name="Haas W."/>
            <person name="Sowa M.E."/>
            <person name="Gygi S.P."/>
        </authorList>
    </citation>
    <scope>IDENTIFICATION BY MASS SPECTROMETRY [LARGE SCALE ANALYSIS]</scope>
    <source>
        <tissue>Spleen</tissue>
        <tissue>Testis</tissue>
    </source>
</reference>
<accession>Q8R332</accession>
<accession>Q3UJF4</accession>
<accession>Q8BUA7</accession>
<accession>Q8BVG7</accession>
<accession>Q8C0W3</accession>
<feature type="chain" id="PRO_0000204893" description="Nucleoporin p58/p45">
    <location>
        <begin position="1"/>
        <end position="587"/>
    </location>
</feature>
<feature type="repeat" description="1">
    <location>
        <begin position="7"/>
        <end position="8"/>
    </location>
</feature>
<feature type="repeat" description="2">
    <location>
        <begin position="30"/>
        <end position="31"/>
    </location>
</feature>
<feature type="repeat" description="3">
    <location>
        <begin position="44"/>
        <end position="45"/>
    </location>
</feature>
<feature type="repeat" description="4">
    <location>
        <begin position="63"/>
        <end position="64"/>
    </location>
</feature>
<feature type="repeat" description="5">
    <location>
        <begin position="68"/>
        <end position="69"/>
    </location>
</feature>
<feature type="repeat" description="6">
    <location>
        <begin position="476"/>
        <end position="477"/>
    </location>
</feature>
<feature type="repeat" description="7">
    <location>
        <begin position="480"/>
        <end position="481"/>
    </location>
</feature>
<feature type="repeat" description="8">
    <location>
        <begin position="501"/>
        <end position="502"/>
    </location>
</feature>
<feature type="repeat" description="9">
    <location>
        <begin position="507"/>
        <end position="508"/>
    </location>
</feature>
<feature type="repeat" description="10">
    <location>
        <begin position="517"/>
        <end position="518"/>
    </location>
</feature>
<feature type="repeat" description="11">
    <location>
        <begin position="519"/>
        <end position="520"/>
    </location>
</feature>
<feature type="repeat" description="12">
    <location>
        <begin position="533"/>
        <end position="534"/>
    </location>
</feature>
<feature type="repeat" description="13">
    <location>
        <begin position="556"/>
        <end position="557"/>
    </location>
</feature>
<feature type="repeat" description="14">
    <location>
        <begin position="566"/>
        <end position="567"/>
    </location>
</feature>
<feature type="region of interest" description="14 X 2 AA repeats of F-G">
    <location>
        <begin position="7"/>
        <end position="567"/>
    </location>
</feature>
<feature type="region of interest" description="Disordered" evidence="5">
    <location>
        <begin position="196"/>
        <end position="236"/>
    </location>
</feature>
<feature type="region of interest" description="Disordered" evidence="5">
    <location>
        <begin position="565"/>
        <end position="587"/>
    </location>
</feature>
<feature type="coiled-coil region" evidence="4">
    <location>
        <begin position="244"/>
        <end position="264"/>
    </location>
</feature>
<feature type="coiled-coil region" evidence="4">
    <location>
        <begin position="302"/>
        <end position="369"/>
    </location>
</feature>
<feature type="compositionally biased region" description="Basic and acidic residues" evidence="5">
    <location>
        <begin position="213"/>
        <end position="234"/>
    </location>
</feature>
<feature type="modified residue" description="Phosphothreonine" evidence="3">
    <location>
        <position position="319"/>
    </location>
</feature>
<feature type="splice variant" id="VSP_008573" description="In isoform 2." evidence="6">
    <original>FGSSSTSGFNFSNPGITASAGLTFGVSNPASAGFGTGGQLLQLKRPPAGNKRGKR</original>
    <variation>QKSHVLTGFRKPSVMETNELGRKIQF</variation>
    <location>
        <begin position="533"/>
        <end position="587"/>
    </location>
</feature>
<feature type="splice variant" id="VSP_008574" description="In isoform 3." evidence="6">
    <original>FGSSSTSGFNFSNPGITASAGLTFGVSNPASAGFGTGGQLLQLKRPPAGNKRGKR</original>
    <variation>LCASA</variation>
    <location>
        <begin position="533"/>
        <end position="587"/>
    </location>
</feature>
<feature type="splice variant" id="VSP_008575" description="In isoform 4." evidence="6">
    <location>
        <begin position="533"/>
        <end position="587"/>
    </location>
</feature>
<feature type="sequence conflict" description="In Ref. 1; BAC26564." evidence="7" ref="1">
    <original>S</original>
    <variation>Y</variation>
    <location>
        <position position="55"/>
    </location>
</feature>
<feature type="sequence conflict" description="In Ref. 1; BAC26564." evidence="7" ref="1">
    <original>L</original>
    <variation>V</variation>
    <location>
        <position position="78"/>
    </location>
</feature>
<feature type="sequence conflict" description="In Ref. 1; BAC39663." evidence="7" ref="1">
    <original>T</original>
    <variation>A</variation>
    <location>
        <position position="117"/>
    </location>
</feature>
<feature type="sequence conflict" description="In Ref. 1; BAC37200." evidence="7" ref="1">
    <original>L</original>
    <variation>F</variation>
    <location>
        <position position="143"/>
    </location>
</feature>
<feature type="sequence conflict" description="In Ref. 1; BAC26564." evidence="7" ref="1">
    <original>G</original>
    <variation>E</variation>
    <location>
        <position position="513"/>
    </location>
</feature>